<accession>A8C8K1</accession>
<gene>
    <name evidence="2" type="primary">PA</name>
</gene>
<sequence length="716" mass="82994">MEDFVRQCFNPMIVELAEKAMKEYGEDLKIETNKFAAICTHLEVCFMYSDFHFINEQGESIIVEPEDPNALLKHRFEIIEGRDRTMAWTVVNSICNTTGAEKPKFLPDLYDYKENRFIEIGVTRREVHIYYLEKANKIKSEKTHIHIFSFTGEEMATKADYTLDEESRARIKTRLFTIRQEMASRGLWDSFRQSERGEETIEERFEITGTMRRLADQSLPPNFSCIENFRAYVDGFEPNGYIEGKLSQMSKEVNARIEPFLKTTPRPIRLPNGPPCFQRSKFLLMDSLKLSIEDPNHEGEGIPLYDAIKCMRTFFGWKEPTVVKPHEKGINPNYLLSWKQVLEELQDIESEEKIPRTKNMKKTSQLKWALGENMAPEKVDFDDCKDVSDLKQYDSDEPELRSFSSWIQNEFNKACELTDSIWIELDEIGEDVAPIEHIASMRRNYFTAEVSHCRATEYIMKGVYINTALLNASCAAMDDFQLIPMISKCRTKEGRRKTNLYGFIIKGRSHLRNDTDVVNFVSMEFSLTDPRLEPHKWERYCVLEIGDMLLRSAIGQVSRPMFLYVRTNGTSKIKMKWGMEMRRCLLQSLQQIESMIEAESSVKEKDMTKEFFENRSETWPIGESPEGVEEGSIGKVCRTLLAKSVFNSLYASPQLEGFSAESRKLLLIVQALRDNLEPGTFDLGGLYEAIEECLINDPWVLLNASWFNSFLTHALR</sequence>
<organismHost>
    <name type="scientific">Aves</name>
    <dbReference type="NCBI Taxonomy" id="8782"/>
</organismHost>
<organismHost>
    <name type="scientific">Homo sapiens</name>
    <name type="common">Human</name>
    <dbReference type="NCBI Taxonomy" id="9606"/>
</organismHost>
<organismHost>
    <name type="scientific">Sus scrofa</name>
    <name type="common">Pig</name>
    <dbReference type="NCBI Taxonomy" id="9823"/>
</organismHost>
<name>PA_I07A0</name>
<keyword id="KW-1157">Cap snatching</keyword>
<keyword id="KW-0255">Endonuclease</keyword>
<keyword id="KW-1262">Eukaryotic host gene expression shutoff by virus</keyword>
<keyword id="KW-1191">Eukaryotic host transcription shutoff by virus</keyword>
<keyword id="KW-1035">Host cytoplasm</keyword>
<keyword id="KW-1190">Host gene expression shutoff by virus</keyword>
<keyword id="KW-1048">Host nucleus</keyword>
<keyword id="KW-0945">Host-virus interaction</keyword>
<keyword id="KW-0378">Hydrolase</keyword>
<keyword id="KW-1104">Inhibition of host RNA polymerase II by virus</keyword>
<keyword id="KW-0464">Manganese</keyword>
<keyword id="KW-0479">Metal-binding</keyword>
<keyword id="KW-0540">Nuclease</keyword>
<keyword id="KW-0597">Phosphoprotein</keyword>
<keyword id="KW-0688">Ribosomal frameshifting</keyword>
<proteinExistence type="inferred from homology"/>
<reference key="1">
    <citation type="submission" date="2007-09" db="EMBL/GenBank/DDBJ databases">
        <title>The NIAID influenza genome sequencing project.</title>
        <authorList>
            <person name="Spiro D."/>
            <person name="Sengamalay N."/>
            <person name="Boyne A."/>
            <person name="Bera J."/>
            <person name="Zaborsky J."/>
            <person name="Subbu V."/>
            <person name="Sparenborg J."/>
            <person name="Gallagher T."/>
            <person name="Overton L."/>
            <person name="Althoff R."/>
            <person name="Liu X."/>
            <person name="Ghedin E."/>
            <person name="Sitz J."/>
            <person name="Katzel D."/>
            <person name="Neupane R."/>
            <person name="Shumway M."/>
            <person name="Koo H."/>
            <person name="Edelman L."/>
            <person name="Menegus M."/>
            <person name="Mayer C."/>
            <person name="Dale S."/>
            <person name="Bao Y."/>
            <person name="Bolotov P."/>
            <person name="Dernovoy D."/>
            <person name="Kiryutin B."/>
            <person name="Lipman D.J."/>
            <person name="Tatusova T."/>
        </authorList>
    </citation>
    <scope>NUCLEOTIDE SEQUENCE [GENOMIC RNA]</scope>
</reference>
<reference key="2">
    <citation type="submission" date="2007-09" db="EMBL/GenBank/DDBJ databases">
        <authorList>
            <consortium name="The NIAID Influenza Genome Sequencing Consortium"/>
        </authorList>
    </citation>
    <scope>NUCLEOTIDE SEQUENCE [GENOMIC RNA]</scope>
</reference>
<feature type="chain" id="PRO_0000372995" description="Polymerase acidic protein">
    <location>
        <begin position="1"/>
        <end position="716"/>
    </location>
</feature>
<feature type="short sequence motif" description="Nuclear localization signal 1 (NLS1)" evidence="1 2">
    <location>
        <begin position="124"/>
        <end position="139"/>
    </location>
</feature>
<feature type="short sequence motif" description="Nuclear localization signal 2 (NLS2)" evidence="1 2">
    <location>
        <begin position="184"/>
        <end position="247"/>
    </location>
</feature>
<feature type="binding site" evidence="2">
    <location>
        <position position="41"/>
    </location>
    <ligand>
        <name>Mn(2+)</name>
        <dbReference type="ChEBI" id="CHEBI:29035"/>
        <label>1</label>
    </ligand>
</feature>
<feature type="binding site" evidence="2">
    <location>
        <position position="80"/>
    </location>
    <ligand>
        <name>Mn(2+)</name>
        <dbReference type="ChEBI" id="CHEBI:29035"/>
        <label>2</label>
    </ligand>
</feature>
<feature type="binding site" evidence="2">
    <location>
        <position position="108"/>
    </location>
    <ligand>
        <name>Mn(2+)</name>
        <dbReference type="ChEBI" id="CHEBI:29035"/>
        <label>1</label>
    </ligand>
</feature>
<feature type="binding site" evidence="2">
    <location>
        <position position="108"/>
    </location>
    <ligand>
        <name>Mn(2+)</name>
        <dbReference type="ChEBI" id="CHEBI:29035"/>
        <label>2</label>
    </ligand>
</feature>
<feature type="binding site" evidence="2">
    <location>
        <position position="119"/>
    </location>
    <ligand>
        <name>Mn(2+)</name>
        <dbReference type="ChEBI" id="CHEBI:29035"/>
        <label>1</label>
    </ligand>
</feature>
<feature type="binding site" evidence="2">
    <location>
        <position position="120"/>
    </location>
    <ligand>
        <name>Mn(2+)</name>
        <dbReference type="ChEBI" id="CHEBI:29035"/>
        <label>1</label>
    </ligand>
</feature>
<evidence type="ECO:0000250" key="1">
    <source>
        <dbReference type="UniProtKB" id="P03433"/>
    </source>
</evidence>
<evidence type="ECO:0000255" key="2">
    <source>
        <dbReference type="HAMAP-Rule" id="MF_04063"/>
    </source>
</evidence>
<protein>
    <recommendedName>
        <fullName evidence="2">Polymerase acidic protein</fullName>
        <ecNumber evidence="2">3.1.-.-</ecNumber>
    </recommendedName>
    <alternativeName>
        <fullName evidence="2">RNA-directed RNA polymerase subunit P2</fullName>
    </alternativeName>
</protein>
<dbReference type="EC" id="3.1.-.-" evidence="2"/>
<dbReference type="EMBL" id="CY026216">
    <property type="protein sequence ID" value="ABV45933.1"/>
    <property type="molecule type" value="Viral_cRNA"/>
</dbReference>
<dbReference type="SMR" id="A8C8K1"/>
<dbReference type="MEROPS" id="S62.001"/>
<dbReference type="Proteomes" id="UP001395887">
    <property type="component" value="Genome"/>
</dbReference>
<dbReference type="GO" id="GO:0030430">
    <property type="term" value="C:host cell cytoplasm"/>
    <property type="evidence" value="ECO:0007669"/>
    <property type="project" value="UniProtKB-SubCell"/>
</dbReference>
<dbReference type="GO" id="GO:0042025">
    <property type="term" value="C:host cell nucleus"/>
    <property type="evidence" value="ECO:0007669"/>
    <property type="project" value="UniProtKB-SubCell"/>
</dbReference>
<dbReference type="GO" id="GO:0004519">
    <property type="term" value="F:endonuclease activity"/>
    <property type="evidence" value="ECO:0007669"/>
    <property type="project" value="UniProtKB-KW"/>
</dbReference>
<dbReference type="GO" id="GO:0046872">
    <property type="term" value="F:metal ion binding"/>
    <property type="evidence" value="ECO:0007669"/>
    <property type="project" value="UniProtKB-KW"/>
</dbReference>
<dbReference type="GO" id="GO:0003723">
    <property type="term" value="F:RNA binding"/>
    <property type="evidence" value="ECO:0007669"/>
    <property type="project" value="UniProtKB-UniRule"/>
</dbReference>
<dbReference type="GO" id="GO:0075526">
    <property type="term" value="P:cap snatching"/>
    <property type="evidence" value="ECO:0007669"/>
    <property type="project" value="UniProtKB-UniRule"/>
</dbReference>
<dbReference type="GO" id="GO:0006351">
    <property type="term" value="P:DNA-templated transcription"/>
    <property type="evidence" value="ECO:0007669"/>
    <property type="project" value="UniProtKB-UniRule"/>
</dbReference>
<dbReference type="GO" id="GO:0039657">
    <property type="term" value="P:symbiont-mediated suppression of host gene expression"/>
    <property type="evidence" value="ECO:0007669"/>
    <property type="project" value="UniProtKB-KW"/>
</dbReference>
<dbReference type="GO" id="GO:0039523">
    <property type="term" value="P:symbiont-mediated suppression of host mRNA transcription via inhibition of RNA polymerase II activity"/>
    <property type="evidence" value="ECO:0007669"/>
    <property type="project" value="UniProtKB-UniRule"/>
</dbReference>
<dbReference type="GO" id="GO:0039694">
    <property type="term" value="P:viral RNA genome replication"/>
    <property type="evidence" value="ECO:0007669"/>
    <property type="project" value="InterPro"/>
</dbReference>
<dbReference type="GO" id="GO:0075523">
    <property type="term" value="P:viral translational frameshifting"/>
    <property type="evidence" value="ECO:0007669"/>
    <property type="project" value="UniProtKB-KW"/>
</dbReference>
<dbReference type="FunFam" id="3.40.91.90:FF:000001">
    <property type="entry name" value="Polymerase acidic protein"/>
    <property type="match status" value="1"/>
</dbReference>
<dbReference type="Gene3D" id="3.40.91.90">
    <property type="entry name" value="Influenza RNA-dependent RNA polymerase subunit PA, endonuclease domain"/>
    <property type="match status" value="1"/>
</dbReference>
<dbReference type="HAMAP" id="MF_04063">
    <property type="entry name" value="INFV_PA"/>
    <property type="match status" value="1"/>
</dbReference>
<dbReference type="InterPro" id="IPR037534">
    <property type="entry name" value="INFV_PA"/>
</dbReference>
<dbReference type="InterPro" id="IPR001009">
    <property type="entry name" value="PA/PA-X"/>
</dbReference>
<dbReference type="InterPro" id="IPR038372">
    <property type="entry name" value="PA/PA-X_sf"/>
</dbReference>
<dbReference type="Pfam" id="PF00603">
    <property type="entry name" value="Flu_PA"/>
    <property type="match status" value="1"/>
</dbReference>
<organism>
    <name type="scientific">Influenza A virus (strain A/USA:Texas/UR06-0195/2007 H1N1)</name>
    <dbReference type="NCBI Taxonomy" id="455880"/>
    <lineage>
        <taxon>Viruses</taxon>
        <taxon>Riboviria</taxon>
        <taxon>Orthornavirae</taxon>
        <taxon>Negarnaviricota</taxon>
        <taxon>Polyploviricotina</taxon>
        <taxon>Insthoviricetes</taxon>
        <taxon>Articulavirales</taxon>
        <taxon>Orthomyxoviridae</taxon>
        <taxon>Alphainfluenzavirus</taxon>
        <taxon>Alphainfluenzavirus influenzae</taxon>
        <taxon>Influenza A virus</taxon>
    </lineage>
</organism>
<comment type="function">
    <text evidence="2">Plays an essential role in viral RNA transcription and replication by forming the heterotrimeric polymerase complex together with PB1 and PB2 subunits. The complex transcribes viral mRNAs by using a unique mechanism called cap-snatching. It consists in the hijacking and cleavage of host capped pre-mRNAs. These short capped RNAs are then used as primers for viral mRNAs. The PB2 subunit is responsible for the binding of the 5' cap of cellular pre-mRNAs which are subsequently cleaved after 10-13 nucleotides by the PA subunit that carries the endonuclease activity.</text>
</comment>
<comment type="cofactor">
    <cofactor evidence="2">
        <name>Mn(2+)</name>
        <dbReference type="ChEBI" id="CHEBI:29035"/>
    </cofactor>
    <text evidence="2">Binds 2 manganese ions per subunit.</text>
</comment>
<comment type="subunit">
    <text evidence="1 2">Influenza RNA polymerase is composed of three subunits: PB1, PB2 and PA. Interacts (via C-terminus) with PB1 (via N-terminus).</text>
</comment>
<comment type="subcellular location">
    <subcellularLocation>
        <location evidence="2">Host cytoplasm</location>
    </subcellularLocation>
    <subcellularLocation>
        <location evidence="2">Host nucleus</location>
    </subcellularLocation>
    <text evidence="1 2">PB1 and PA are transported in the host nucleus as a complex.</text>
</comment>
<comment type="alternative products">
    <event type="ribosomal frameshifting"/>
    <isoform>
        <id>A8C8K1-1</id>
        <name>PA</name>
        <sequence type="displayed"/>
    </isoform>
    <isoform>
        <id>P0DJW6-1</id>
        <name>PA-X</name>
        <sequence type="external"/>
    </isoform>
</comment>
<comment type="PTM">
    <text evidence="1 2">Phosphorylated on serines and threonines by host kinases, including human casein kinase II.</text>
</comment>
<comment type="similarity">
    <text evidence="2">Belongs to the influenza viruses PA family.</text>
</comment>